<sequence length="80" mass="8998">MIIPWQELDADTLNNLLEHFVLQEGTEYGEHDVSLADKVADVRTQLQQGLAVIVYSELHESVNIVPKATLDRAQVDDIPE</sequence>
<protein>
    <recommendedName>
        <fullName evidence="1">UPF0270 protein AHA_0994</fullName>
    </recommendedName>
</protein>
<comment type="similarity">
    <text evidence="1">Belongs to the UPF0270 family.</text>
</comment>
<reference key="1">
    <citation type="journal article" date="2006" name="J. Bacteriol.">
        <title>Genome sequence of Aeromonas hydrophila ATCC 7966T: jack of all trades.</title>
        <authorList>
            <person name="Seshadri R."/>
            <person name="Joseph S.W."/>
            <person name="Chopra A.K."/>
            <person name="Sha J."/>
            <person name="Shaw J."/>
            <person name="Graf J."/>
            <person name="Haft D.H."/>
            <person name="Wu M."/>
            <person name="Ren Q."/>
            <person name="Rosovitz M.J."/>
            <person name="Madupu R."/>
            <person name="Tallon L."/>
            <person name="Kim M."/>
            <person name="Jin S."/>
            <person name="Vuong H."/>
            <person name="Stine O.C."/>
            <person name="Ali A."/>
            <person name="Horneman A.J."/>
            <person name="Heidelberg J.F."/>
        </authorList>
    </citation>
    <scope>NUCLEOTIDE SEQUENCE [LARGE SCALE GENOMIC DNA]</scope>
    <source>
        <strain>ATCC 7966 / DSM 30187 / BCRC 13018 / CCUG 14551 / JCM 1027 / KCTC 2358 / NCIMB 9240 / NCTC 8049</strain>
    </source>
</reference>
<keyword id="KW-1185">Reference proteome</keyword>
<gene>
    <name type="ordered locus">AHA_0994</name>
</gene>
<evidence type="ECO:0000255" key="1">
    <source>
        <dbReference type="HAMAP-Rule" id="MF_00690"/>
    </source>
</evidence>
<name>Y994_AERHH</name>
<feature type="chain" id="PRO_1000045156" description="UPF0270 protein AHA_0994">
    <location>
        <begin position="1"/>
        <end position="80"/>
    </location>
</feature>
<proteinExistence type="inferred from homology"/>
<organism>
    <name type="scientific">Aeromonas hydrophila subsp. hydrophila (strain ATCC 7966 / DSM 30187 / BCRC 13018 / CCUG 14551 / JCM 1027 / KCTC 2358 / NCIMB 9240 / NCTC 8049)</name>
    <dbReference type="NCBI Taxonomy" id="380703"/>
    <lineage>
        <taxon>Bacteria</taxon>
        <taxon>Pseudomonadati</taxon>
        <taxon>Pseudomonadota</taxon>
        <taxon>Gammaproteobacteria</taxon>
        <taxon>Aeromonadales</taxon>
        <taxon>Aeromonadaceae</taxon>
        <taxon>Aeromonas</taxon>
    </lineage>
</organism>
<dbReference type="EMBL" id="CP000462">
    <property type="protein sequence ID" value="ABK37900.1"/>
    <property type="molecule type" value="Genomic_DNA"/>
</dbReference>
<dbReference type="RefSeq" id="WP_011704929.1">
    <property type="nucleotide sequence ID" value="NC_008570.1"/>
</dbReference>
<dbReference type="RefSeq" id="YP_855540.1">
    <property type="nucleotide sequence ID" value="NC_008570.1"/>
</dbReference>
<dbReference type="SMR" id="A0KGZ0"/>
<dbReference type="STRING" id="380703.AHA_0994"/>
<dbReference type="EnsemblBacteria" id="ABK37900">
    <property type="protein sequence ID" value="ABK37900"/>
    <property type="gene ID" value="AHA_0994"/>
</dbReference>
<dbReference type="GeneID" id="4487535"/>
<dbReference type="KEGG" id="aha:AHA_0994"/>
<dbReference type="PATRIC" id="fig|380703.7.peg.998"/>
<dbReference type="eggNOG" id="COG3089">
    <property type="taxonomic scope" value="Bacteria"/>
</dbReference>
<dbReference type="HOGENOM" id="CLU_186759_1_0_6"/>
<dbReference type="OrthoDB" id="6120729at2"/>
<dbReference type="Proteomes" id="UP000000756">
    <property type="component" value="Chromosome"/>
</dbReference>
<dbReference type="Gene3D" id="1.10.10.610">
    <property type="entry name" value="YehU-like"/>
    <property type="match status" value="1"/>
</dbReference>
<dbReference type="HAMAP" id="MF_00690">
    <property type="entry name" value="UPF0270"/>
    <property type="match status" value="1"/>
</dbReference>
<dbReference type="InterPro" id="IPR010648">
    <property type="entry name" value="UPF0270"/>
</dbReference>
<dbReference type="InterPro" id="IPR036685">
    <property type="entry name" value="YehU-like_sf"/>
</dbReference>
<dbReference type="NCBIfam" id="NF003438">
    <property type="entry name" value="PRK04966.1"/>
    <property type="match status" value="1"/>
</dbReference>
<dbReference type="Pfam" id="PF06794">
    <property type="entry name" value="UPF0270"/>
    <property type="match status" value="1"/>
</dbReference>
<dbReference type="PIRSF" id="PIRSF006169">
    <property type="entry name" value="UCP006169"/>
    <property type="match status" value="1"/>
</dbReference>
<dbReference type="SUPFAM" id="SSF118001">
    <property type="entry name" value="YehU-like"/>
    <property type="match status" value="1"/>
</dbReference>
<accession>A0KGZ0</accession>